<evidence type="ECO:0000255" key="1">
    <source>
        <dbReference type="HAMAP-Rule" id="MF_04074"/>
    </source>
</evidence>
<comment type="function">
    <text evidence="1">Multifunctional protein that plays a role in silencing host antiviral defenses and promoting viral transcription. Does not seem to be essential for HBV infection. May be directly involved in development of cirrhosis and liver cancer (hepatocellular carcinoma). Most of cytosolic activities involve modulation of cytosolic calcium. The effect on apoptosis is controversial depending on the cell types in which the studies have been conducted. May induce apoptosis by localizing in mitochondria and causing loss of mitochondrial membrane potential. May also modulate apoptosis by binding host CFLAR, a key regulator of the death-inducing signaling complex (DISC). Promotes viral transcription by using the host E3 ubiquitin ligase DDB1 to target the SMC5-SMC6 complex to proteasomal degradation. This host complex would otherwise bind to viral episomal DNA, and prevents its transcription. Moderately stimulates transcription of many different viral and cellular transcription elements. Promoters and enhancers stimulated by HBx contain DNA binding sites for NF-kappa-B, AP-1, AP-2, c-EBP, ATF/CREB, or the calcium-activated factor NF-AT.</text>
</comment>
<comment type="subunit">
    <text evidence="1">May form homodimer. May interact with host CEBPA, CFLAR, CREB1, DDB1, E4F1, HBXIP, HSPD1/HSP60, NFKBIA, POLR2E and SMAD4. Interacts with host SMC5-SMC6 complex and induces its degradation. Interacts with host TRPC4AP; leading to prevent ubiquitination of TRPC4AP. Interacts with host PLSCR1; this interaction promotes ubiquitination and degradation of HBx and impairs HBx-mediated cell proliferation.</text>
</comment>
<comment type="subcellular location">
    <subcellularLocation>
        <location evidence="1">Host cytoplasm</location>
    </subcellularLocation>
    <subcellularLocation>
        <location evidence="1">Host nucleus</location>
    </subcellularLocation>
    <subcellularLocation>
        <location evidence="1">Host mitochondrion</location>
    </subcellularLocation>
    <text evidence="1">Mainly cytoplasmic as only a fraction is detected in the nucleus. In cytoplasm, a minor fraction associates with mitochondria or proteasomes.</text>
</comment>
<comment type="PTM">
    <text evidence="1">A fraction may be phosphorylated in insect cells and HepG2 cells, a human hepatoblastoma cell line. Phosphorylated in vitro by host protein kinase C or mitogen-activated protein kinase. N-acetylated in insect cells.</text>
</comment>
<comment type="similarity">
    <text evidence="1">Belongs to the orthohepadnavirus protein X family.</text>
</comment>
<comment type="caution">
    <text>Transcriptional activities should be taken with a grain of salt. As of 2007, all studies demonstrating in vivo interaction between protein X and transcriptional components were performed with significant overexpression of both proteins and in the absence of viral infection.</text>
</comment>
<accession>P20975</accession>
<protein>
    <recommendedName>
        <fullName evidence="1">Protein X</fullName>
    </recommendedName>
    <alternativeName>
        <fullName evidence="1">HBx</fullName>
    </alternativeName>
    <alternativeName>
        <fullName evidence="1">Peptide X</fullName>
    </alternativeName>
    <alternativeName>
        <fullName evidence="1">pX</fullName>
    </alternativeName>
</protein>
<proteinExistence type="inferred from homology"/>
<organism>
    <name type="scientific">Hepatitis B virus genotype B2 (isolate Indonesia/pIDW420/1988)</name>
    <name type="common">HBV-B</name>
    <dbReference type="NCBI Taxonomy" id="10412"/>
    <lineage>
        <taxon>Viruses</taxon>
        <taxon>Riboviria</taxon>
        <taxon>Pararnavirae</taxon>
        <taxon>Artverviricota</taxon>
        <taxon>Revtraviricetes</taxon>
        <taxon>Blubervirales</taxon>
        <taxon>Hepadnaviridae</taxon>
        <taxon>Orthohepadnavirus</taxon>
        <taxon>Hepatitis B virus</taxon>
    </lineage>
</organism>
<feature type="chain" id="PRO_0000222366" description="Protein X">
    <location>
        <begin position="1"/>
        <end position="154"/>
    </location>
</feature>
<feature type="region of interest" description="Mitochondrial targeting sequence" evidence="1">
    <location>
        <begin position="68"/>
        <end position="117"/>
    </location>
</feature>
<gene>
    <name evidence="1" type="primary">X</name>
</gene>
<sequence>MAARLCCQLDPARDVLCLRPVGAESRGRPLPGPLGALPPASPPAVPSDHGAHLSLRGLPVCAFSSAGPCALRFTSARRMETTVNAHRNLPKVLHKRTLGLSAMSTTDLEAHFKDCVFTEWEELGEEIRLKVFVLGGCRHKLVCSPAPCNFFTSA</sequence>
<dbReference type="EMBL" id="D00331">
    <property type="status" value="NOT_ANNOTATED_CDS"/>
    <property type="molecule type" value="Genomic_DNA"/>
</dbReference>
<dbReference type="PIR" id="JS0604">
    <property type="entry name" value="JS0604"/>
</dbReference>
<dbReference type="SMR" id="P20975"/>
<dbReference type="Proteomes" id="UP000007914">
    <property type="component" value="Genome"/>
</dbReference>
<dbReference type="GO" id="GO:0033650">
    <property type="term" value="C:host cell mitochondrion"/>
    <property type="evidence" value="ECO:0007669"/>
    <property type="project" value="UniProtKB-SubCell"/>
</dbReference>
<dbReference type="GO" id="GO:0042025">
    <property type="term" value="C:host cell nucleus"/>
    <property type="evidence" value="ECO:0007669"/>
    <property type="project" value="UniProtKB-SubCell"/>
</dbReference>
<dbReference type="GO" id="GO:0006351">
    <property type="term" value="P:DNA-templated transcription"/>
    <property type="evidence" value="ECO:0007669"/>
    <property type="project" value="UniProtKB-UniRule"/>
</dbReference>
<dbReference type="GO" id="GO:0085033">
    <property type="term" value="P:symbiont-mediated activation of host NF-kappaB cascade"/>
    <property type="evidence" value="ECO:0007669"/>
    <property type="project" value="UniProtKB-UniRule"/>
</dbReference>
<dbReference type="GO" id="GO:0039592">
    <property type="term" value="P:symbiont-mediated arrest of host cell cycle during G2/M transition"/>
    <property type="evidence" value="ECO:0007669"/>
    <property type="project" value="UniProtKB-UniRule"/>
</dbReference>
<dbReference type="GO" id="GO:0019079">
    <property type="term" value="P:viral genome replication"/>
    <property type="evidence" value="ECO:0007669"/>
    <property type="project" value="UniProtKB-UniRule"/>
</dbReference>
<dbReference type="HAMAP" id="MF_04074">
    <property type="entry name" value="HBV_X"/>
    <property type="match status" value="1"/>
</dbReference>
<dbReference type="InterPro" id="IPR000236">
    <property type="entry name" value="Transactivation_prot_X"/>
</dbReference>
<dbReference type="Pfam" id="PF00739">
    <property type="entry name" value="X"/>
    <property type="match status" value="1"/>
</dbReference>
<keyword id="KW-1074">Activation of host NF-kappa-B by virus</keyword>
<keyword id="KW-0010">Activator</keyword>
<keyword id="KW-0053">Apoptosis</keyword>
<keyword id="KW-1035">Host cytoplasm</keyword>
<keyword id="KW-1079">Host G2/M cell cycle arrest by virus</keyword>
<keyword id="KW-1045">Host mitochondrion</keyword>
<keyword id="KW-1048">Host nucleus</keyword>
<keyword id="KW-0945">Host-virus interaction</keyword>
<keyword id="KW-1121">Modulation of host cell cycle by virus</keyword>
<keyword id="KW-0804">Transcription</keyword>
<keyword id="KW-0805">Transcription regulation</keyword>
<name>X_HBVB2</name>
<reference key="1">
    <citation type="journal article" date="1988" name="J. Gen. Virol.">
        <title>Typing hepatitis B virus by homology in nucleotide sequence: comparison of surface antigen subtypes.</title>
        <authorList>
            <person name="Okamoto H."/>
            <person name="Tsuda F."/>
            <person name="Sakugawa H."/>
            <person name="Sastrosoewignjo R.I."/>
            <person name="Imai M."/>
            <person name="Miyakawa Y."/>
            <person name="Mayumi M."/>
        </authorList>
    </citation>
    <scope>NUCLEOTIDE SEQUENCE [GENOMIC DNA]</scope>
</reference>
<reference key="2">
    <citation type="journal article" date="2004" name="J. Virol.">
        <title>The enigmatic X gene of hepatitis B virus.</title>
        <authorList>
            <person name="Bouchard M.J."/>
            <person name="Schneider R.J."/>
        </authorList>
    </citation>
    <scope>REVIEW</scope>
</reference>
<reference key="3">
    <citation type="journal article" date="2006" name="Cancer Sci.">
        <title>Molecular functions and biological roles of hepatitis B virus x protein.</title>
        <authorList>
            <person name="Tang H."/>
            <person name="Oishi N."/>
            <person name="Kaneko S."/>
            <person name="Murakami S."/>
        </authorList>
    </citation>
    <scope>REVIEW</scope>
</reference>
<organismHost>
    <name type="scientific">Homo sapiens</name>
    <name type="common">Human</name>
    <dbReference type="NCBI Taxonomy" id="9606"/>
</organismHost>
<organismHost>
    <name type="scientific">Pan troglodytes</name>
    <name type="common">Chimpanzee</name>
    <dbReference type="NCBI Taxonomy" id="9598"/>
</organismHost>